<dbReference type="EMBL" id="M25283">
    <property type="protein sequence ID" value="AAA43216.1"/>
    <property type="molecule type" value="Genomic_RNA"/>
</dbReference>
<dbReference type="EMBL" id="D90302">
    <property type="protein sequence ID" value="BAA14332.1"/>
    <property type="molecule type" value="Genomic_RNA"/>
</dbReference>
<dbReference type="EMBL" id="AF290436">
    <property type="protein sequence ID" value="AAF99711.1"/>
    <property type="molecule type" value="mRNA"/>
</dbReference>
<dbReference type="PIR" id="A34214">
    <property type="entry name" value="HMIVF1"/>
</dbReference>
<dbReference type="PDB" id="5XL8">
    <property type="method" value="X-ray"/>
    <property type="resolution" value="2.00 A"/>
    <property type="chains" value="A/B/C=17-519"/>
</dbReference>
<dbReference type="PDB" id="5XL9">
    <property type="method" value="X-ray"/>
    <property type="resolution" value="2.39 A"/>
    <property type="chains" value="A/B/C=17-519"/>
</dbReference>
<dbReference type="PDB" id="5XLA">
    <property type="method" value="X-ray"/>
    <property type="resolution" value="2.10 A"/>
    <property type="chains" value="A/B=17-519"/>
</dbReference>
<dbReference type="PDB" id="7U8J">
    <property type="method" value="X-ray"/>
    <property type="resolution" value="4.90 A"/>
    <property type="chains" value="A=65-291"/>
</dbReference>
<dbReference type="PDBsum" id="5XL8"/>
<dbReference type="PDBsum" id="5XL9"/>
<dbReference type="PDBsum" id="5XLA"/>
<dbReference type="PDBsum" id="7U8J"/>
<dbReference type="SMR" id="P19696"/>
<dbReference type="GlyCosmos" id="P19696">
    <property type="glycosylation" value="6 sites, No reported glycans"/>
</dbReference>
<dbReference type="Proteomes" id="UP000008434">
    <property type="component" value="Genome"/>
</dbReference>
<dbReference type="Proteomes" id="UP000108613">
    <property type="component" value="Genome"/>
</dbReference>
<dbReference type="GO" id="GO:0020002">
    <property type="term" value="C:host cell plasma membrane"/>
    <property type="evidence" value="ECO:0007669"/>
    <property type="project" value="UniProtKB-SubCell"/>
</dbReference>
<dbReference type="GO" id="GO:0016020">
    <property type="term" value="C:membrane"/>
    <property type="evidence" value="ECO:0007669"/>
    <property type="project" value="UniProtKB-UniRule"/>
</dbReference>
<dbReference type="GO" id="GO:0019031">
    <property type="term" value="C:viral envelope"/>
    <property type="evidence" value="ECO:0007669"/>
    <property type="project" value="UniProtKB-UniRule"/>
</dbReference>
<dbReference type="GO" id="GO:0055036">
    <property type="term" value="C:virion membrane"/>
    <property type="evidence" value="ECO:0007669"/>
    <property type="project" value="UniProtKB-SubCell"/>
</dbReference>
<dbReference type="GO" id="GO:0046789">
    <property type="term" value="F:host cell surface receptor binding"/>
    <property type="evidence" value="ECO:0007669"/>
    <property type="project" value="UniProtKB-UniRule"/>
</dbReference>
<dbReference type="GO" id="GO:0075512">
    <property type="term" value="P:clathrin-dependent endocytosis of virus by host cell"/>
    <property type="evidence" value="ECO:0007669"/>
    <property type="project" value="UniProtKB-UniRule"/>
</dbReference>
<dbReference type="GO" id="GO:0039654">
    <property type="term" value="P:fusion of virus membrane with host endosome membrane"/>
    <property type="evidence" value="ECO:0007669"/>
    <property type="project" value="UniProtKB-UniRule"/>
</dbReference>
<dbReference type="GO" id="GO:0019064">
    <property type="term" value="P:fusion of virus membrane with host plasma membrane"/>
    <property type="evidence" value="ECO:0007669"/>
    <property type="project" value="InterPro"/>
</dbReference>
<dbReference type="GO" id="GO:0046761">
    <property type="term" value="P:viral budding from plasma membrane"/>
    <property type="evidence" value="ECO:0007669"/>
    <property type="project" value="UniProtKB-UniRule"/>
</dbReference>
<dbReference type="GO" id="GO:0019062">
    <property type="term" value="P:virion attachment to host cell"/>
    <property type="evidence" value="ECO:0007669"/>
    <property type="project" value="UniProtKB-KW"/>
</dbReference>
<dbReference type="Gene3D" id="3.90.20.10">
    <property type="match status" value="1"/>
</dbReference>
<dbReference type="Gene3D" id="3.90.209.20">
    <property type="match status" value="1"/>
</dbReference>
<dbReference type="HAMAP" id="MF_04072">
    <property type="entry name" value="INFV_HEMA"/>
    <property type="match status" value="1"/>
</dbReference>
<dbReference type="InterPro" id="IPR008980">
    <property type="entry name" value="Capsid_hemagglutn"/>
</dbReference>
<dbReference type="InterPro" id="IPR013828">
    <property type="entry name" value="Hemagglutn_HA1_a/b_dom_sf"/>
</dbReference>
<dbReference type="InterPro" id="IPR000149">
    <property type="entry name" value="Hemagglutn_influenz_A"/>
</dbReference>
<dbReference type="InterPro" id="IPR001364">
    <property type="entry name" value="Hemagglutn_influenz_A/B"/>
</dbReference>
<dbReference type="Pfam" id="PF00509">
    <property type="entry name" value="Hemagglutinin"/>
    <property type="match status" value="1"/>
</dbReference>
<dbReference type="PRINTS" id="PR00330">
    <property type="entry name" value="HEMAGGLUTN1"/>
</dbReference>
<dbReference type="PRINTS" id="PR00329">
    <property type="entry name" value="HEMAGGLUTN12"/>
</dbReference>
<dbReference type="SUPFAM" id="SSF58064">
    <property type="entry name" value="Influenza hemagglutinin (stalk)"/>
    <property type="match status" value="1"/>
</dbReference>
<dbReference type="SUPFAM" id="SSF49818">
    <property type="entry name" value="Viral protein domain"/>
    <property type="match status" value="1"/>
</dbReference>
<keyword id="KW-0002">3D-structure</keyword>
<keyword id="KW-1167">Clathrin- and caveolin-independent endocytosis of virus by host</keyword>
<keyword id="KW-1165">Clathrin-mediated endocytosis of virus by host</keyword>
<keyword id="KW-1015">Disulfide bond</keyword>
<keyword id="KW-1170">Fusion of virus membrane with host endosomal membrane</keyword>
<keyword id="KW-1168">Fusion of virus membrane with host membrane</keyword>
<keyword id="KW-0325">Glycoprotein</keyword>
<keyword id="KW-0348">Hemagglutinin</keyword>
<keyword id="KW-1032">Host cell membrane</keyword>
<keyword id="KW-1043">Host membrane</keyword>
<keyword id="KW-0945">Host-virus interaction</keyword>
<keyword id="KW-0449">Lipoprotein</keyword>
<keyword id="KW-0472">Membrane</keyword>
<keyword id="KW-0564">Palmitate</keyword>
<keyword id="KW-0732">Signal</keyword>
<keyword id="KW-0812">Transmembrane</keyword>
<keyword id="KW-1133">Transmembrane helix</keyword>
<keyword id="KW-1161">Viral attachment to host cell</keyword>
<keyword id="KW-0261">Viral envelope protein</keyword>
<keyword id="KW-1162">Viral penetration into host cytoplasm</keyword>
<keyword id="KW-0946">Virion</keyword>
<keyword id="KW-1164">Virus endocytosis by host</keyword>
<keyword id="KW-1160">Virus entry into host cell</keyword>
<organismHost>
    <name type="scientific">Aves</name>
    <dbReference type="NCBI Taxonomy" id="8782"/>
</organismHost>
<organismHost>
    <name type="scientific">Sus scrofa</name>
    <name type="common">Pig</name>
    <dbReference type="NCBI Taxonomy" id="9823"/>
</organismHost>
<reference key="1">
    <citation type="journal article" date="1991" name="Virology">
        <title>Comparison of complete amino acid sequences and receptor-binding properties among 13 serotypes of hemagglutinins of influenza A viruses.</title>
        <authorList>
            <person name="Nobusawa E."/>
            <person name="Aoyama T."/>
            <person name="Kato H."/>
            <person name="Suzuki Y."/>
            <person name="Tateno Y."/>
            <person name="Nakajima K."/>
        </authorList>
    </citation>
    <scope>NUCLEOTIDE SEQUENCE [GENOMIC RNA]</scope>
</reference>
<reference key="2">
    <citation type="journal article" date="1989" name="Virology">
        <title>Distinct lineages of influenza virus H4 hemagglutinin genes in different regions of the world.</title>
        <authorList>
            <person name="Donis R.O."/>
            <person name="Bean W.J."/>
            <person name="Kawaoka Y."/>
            <person name="Webster R.G."/>
        </authorList>
    </citation>
    <scope>NUCLEOTIDE SEQUENCE [GENOMIC RNA]</scope>
</reference>
<reference key="3">
    <citation type="journal article" date="2000" name="Virus Res.">
        <title>Intergenic HA-NA interactions in influenza A virus: postreassortment substitutions of charged amino acid in the hemagglutinin of different subtypes.</title>
        <authorList>
            <person name="Kaverin N.V."/>
            <person name="Matrosovich M.N."/>
            <person name="Gambaryan A.S."/>
            <person name="Rudneva I.A."/>
            <person name="Shilov A.A."/>
            <person name="Varich N.L."/>
            <person name="Makarova N.V."/>
            <person name="Kropotkina E.A."/>
            <person name="Sinitsin B.V."/>
        </authorList>
    </citation>
    <scope>NUCLEOTIDE SEQUENCE [MRNA]</scope>
</reference>
<sequence length="564" mass="63160">MLSIVILFLLIAENSSQNYTGNPVICMGHHAVANGTMVKTLADDQVEVVTAQELVESQNLPELCPSPLRLVDGQTCDIINGALGSPGCDHLNGAEWDVFIERPNAVDTCYPFDVPEYQSLRSILANNGKFEFIAEEFQWNTVKQNGKSGACKRANVDDFFNRLNWLVKSDGNAYPLQNLTKINNGDYARLYIWGVHHPSTSTEQTNLYKNNPGRVTVSTKTSQTSVVPDIGSRPLVRGQSGRVSFYWTIVEPGDLIVFNTIGNLIAPRGHYKLNNQKKSTILNTAIPIGSCVSKCHTDKGSLSTTKPFQNISRIAVGDCPRYVKQGSLKLATGMRNIPEKASRGLFGAIAGFIENGWQGLIDGWYGFRHQNAEGTGTAADLKSTQAAIDQINGKLNRLIEKTNDKYHQIEKEFEQVEGRIQDLENYVEDTKIDLWSYNAELLVALENQHTIDVTDSEMNKLFERVRRQLRENAEDKGNGCFEIFHKCDNNCIESIRNGTYDHDIYRDEAINNRFQIQGVKLTQGYKDIILWISFSISCFLLVALLLAFILWACQNGNIRCQICI</sequence>
<gene>
    <name evidence="1" type="primary">HA</name>
</gene>
<feature type="signal peptide" evidence="1">
    <location>
        <begin position="1"/>
        <end position="16"/>
    </location>
</feature>
<feature type="chain" id="PRO_0000440388" description="Hemagglutinin" evidence="1">
    <location>
        <begin position="17"/>
        <end position="564"/>
    </location>
</feature>
<feature type="chain" id="PRO_0000038912" description="Hemagglutinin HA1 chain">
    <location>
        <begin position="17"/>
        <end position="342"/>
    </location>
</feature>
<feature type="chain" id="PRO_0000038913" description="Hemagglutinin HA2 chain" evidence="1">
    <location>
        <begin position="344"/>
        <end position="564"/>
    </location>
</feature>
<feature type="topological domain" description="Extracellular" evidence="1">
    <location>
        <begin position="17"/>
        <end position="527"/>
    </location>
</feature>
<feature type="transmembrane region" description="Helical" evidence="1">
    <location>
        <begin position="528"/>
        <end position="548"/>
    </location>
</feature>
<feature type="topological domain" description="Cytoplasmic" evidence="1">
    <location>
        <begin position="549"/>
        <end position="564"/>
    </location>
</feature>
<feature type="site" description="Cleavage; by host" evidence="1">
    <location>
        <begin position="343"/>
        <end position="344"/>
    </location>
</feature>
<feature type="lipid moiety-binding region" description="S-palmitoyl cysteine; by host" evidence="1">
    <location>
        <position position="553"/>
    </location>
</feature>
<feature type="lipid moiety-binding region" description="S-palmitoyl cysteine; by host" evidence="1">
    <location>
        <position position="560"/>
    </location>
</feature>
<feature type="lipid moiety-binding region" description="S-palmitoyl cysteine; by host" evidence="1">
    <location>
        <position position="563"/>
    </location>
</feature>
<feature type="glycosylation site" description="N-linked (GlcNAc...) asparagine; by host" evidence="1">
    <location>
        <position position="14"/>
    </location>
</feature>
<feature type="glycosylation site" description="N-linked (GlcNAc...) asparagine; by host" evidence="1">
    <location>
        <position position="18"/>
    </location>
</feature>
<feature type="glycosylation site" description="N-linked (GlcNAc...) asparagine; by host" evidence="1">
    <location>
        <position position="34"/>
    </location>
</feature>
<feature type="glycosylation site" description="N-linked (GlcNAc...) asparagine; by host" evidence="1">
    <location>
        <position position="178"/>
    </location>
</feature>
<feature type="glycosylation site" description="N-linked (GlcNAc...) asparagine; by host" evidence="1">
    <location>
        <position position="310"/>
    </location>
</feature>
<feature type="glycosylation site" description="N-linked (GlcNAc...) asparagine; by host" evidence="1">
    <location>
        <position position="497"/>
    </location>
</feature>
<feature type="disulfide bond" description="Interchain (between HA1 and HA2 chains)" evidence="1">
    <location>
        <begin position="26"/>
        <end position="480"/>
    </location>
</feature>
<feature type="disulfide bond" evidence="1">
    <location>
        <begin position="64"/>
        <end position="291"/>
    </location>
</feature>
<feature type="disulfide bond" evidence="1">
    <location>
        <begin position="76"/>
        <end position="88"/>
    </location>
</feature>
<feature type="disulfide bond" evidence="1">
    <location>
        <begin position="109"/>
        <end position="151"/>
    </location>
</feature>
<feature type="disulfide bond" evidence="1">
    <location>
        <begin position="295"/>
        <end position="319"/>
    </location>
</feature>
<feature type="disulfide bond" evidence="1">
    <location>
        <begin position="487"/>
        <end position="491"/>
    </location>
</feature>
<feature type="sequence conflict" description="In Ref. 2; BAA14332." evidence="2" ref="2">
    <original>D</original>
    <variation>N</variation>
    <location>
        <position position="157"/>
    </location>
</feature>
<feature type="sequence conflict" description="In Ref. 3; AAF99711." evidence="2" ref="3">
    <original>L</original>
    <variation>F</variation>
    <location>
        <position position="176"/>
    </location>
</feature>
<feature type="sequence conflict" description="In Ref. 2; BAA14332." evidence="2" ref="2">
    <original>S</original>
    <variation>D</variation>
    <location>
        <position position="201"/>
    </location>
</feature>
<feature type="sequence conflict" description="In Ref. 3; AAF99711." evidence="2" ref="3">
    <original>T</original>
    <variation>I</variation>
    <location>
        <position position="205"/>
    </location>
</feature>
<feature type="sequence conflict" description="In Ref. 2; BAA14332." evidence="2" ref="2">
    <original>R</original>
    <variation>S</variation>
    <location>
        <position position="214"/>
    </location>
</feature>
<feature type="sequence conflict" description="In Ref. 2; BAA14332." evidence="2" ref="2">
    <original>D</original>
    <variation>N</variation>
    <location>
        <position position="229"/>
    </location>
</feature>
<feature type="sequence conflict" description="In Ref. 2; BAA14332." evidence="2" ref="2">
    <original>H</original>
    <variation>Y</variation>
    <location>
        <position position="270"/>
    </location>
</feature>
<feature type="sequence conflict" description="In Ref. 3; AAF99711." evidence="2" ref="3">
    <original>D</original>
    <variation>N</variation>
    <location>
        <position position="389"/>
    </location>
</feature>
<feature type="sequence conflict" description="In Ref. 2; BAA14332." evidence="2" ref="2">
    <original>N</original>
    <variation>K</variation>
    <location>
        <position position="425"/>
    </location>
</feature>
<feature type="sequence conflict" description="In Ref. 2; BAA14332." evidence="2" ref="2">
    <original>N</original>
    <variation>Y</variation>
    <location>
        <position position="489"/>
    </location>
</feature>
<feature type="sequence conflict" description="In Ref. 3; AAF99711." evidence="2" ref="3">
    <original>N</original>
    <variation>D</variation>
    <location>
        <position position="511"/>
    </location>
</feature>
<feature type="strand" evidence="3">
    <location>
        <begin position="24"/>
        <end position="30"/>
    </location>
</feature>
<feature type="strand" evidence="3">
    <location>
        <begin position="36"/>
        <end position="38"/>
    </location>
</feature>
<feature type="strand" evidence="3">
    <location>
        <begin position="46"/>
        <end position="49"/>
    </location>
</feature>
<feature type="strand" evidence="3">
    <location>
        <begin position="51"/>
        <end position="53"/>
    </location>
</feature>
<feature type="strand" evidence="3">
    <location>
        <begin position="61"/>
        <end position="63"/>
    </location>
</feature>
<feature type="strand" evidence="3">
    <location>
        <begin position="66"/>
        <end position="68"/>
    </location>
</feature>
<feature type="strand" evidence="3">
    <location>
        <begin position="70"/>
        <end position="72"/>
    </location>
</feature>
<feature type="helix" evidence="3">
    <location>
        <begin position="78"/>
        <end position="83"/>
    </location>
</feature>
<feature type="helix" evidence="3">
    <location>
        <begin position="89"/>
        <end position="91"/>
    </location>
</feature>
<feature type="strand" evidence="3">
    <location>
        <begin position="97"/>
        <end position="101"/>
    </location>
</feature>
<feature type="helix" evidence="3">
    <location>
        <begin position="117"/>
        <end position="127"/>
    </location>
</feature>
<feature type="strand" evidence="3">
    <location>
        <begin position="132"/>
        <end position="134"/>
    </location>
</feature>
<feature type="strand" evidence="3">
    <location>
        <begin position="141"/>
        <end position="143"/>
    </location>
</feature>
<feature type="strand" evidence="3">
    <location>
        <begin position="148"/>
        <end position="153"/>
    </location>
</feature>
<feature type="strand" evidence="3">
    <location>
        <begin position="156"/>
        <end position="158"/>
    </location>
</feature>
<feature type="strand" evidence="3">
    <location>
        <begin position="163"/>
        <end position="165"/>
    </location>
</feature>
<feature type="strand" evidence="3">
    <location>
        <begin position="177"/>
        <end position="182"/>
    </location>
</feature>
<feature type="strand" evidence="3">
    <location>
        <begin position="185"/>
        <end position="187"/>
    </location>
</feature>
<feature type="strand" evidence="3">
    <location>
        <begin position="189"/>
        <end position="197"/>
    </location>
</feature>
<feature type="helix" evidence="3">
    <location>
        <begin position="201"/>
        <end position="208"/>
    </location>
</feature>
<feature type="strand" evidence="3">
    <location>
        <begin position="209"/>
        <end position="212"/>
    </location>
</feature>
<feature type="strand" evidence="3">
    <location>
        <begin position="214"/>
        <end position="218"/>
    </location>
</feature>
<feature type="strand" evidence="3">
    <location>
        <begin position="223"/>
        <end position="226"/>
    </location>
</feature>
<feature type="strand" evidence="3">
    <location>
        <begin position="242"/>
        <end position="250"/>
    </location>
</feature>
<feature type="strand" evidence="3">
    <location>
        <begin position="255"/>
        <end position="262"/>
    </location>
</feature>
<feature type="strand" evidence="3">
    <location>
        <begin position="264"/>
        <end position="272"/>
    </location>
</feature>
<feature type="strand" evidence="3">
    <location>
        <begin position="280"/>
        <end position="283"/>
    </location>
</feature>
<feature type="strand" evidence="3">
    <location>
        <begin position="294"/>
        <end position="297"/>
    </location>
</feature>
<feature type="strand" evidence="3">
    <location>
        <begin position="300"/>
        <end position="302"/>
    </location>
</feature>
<feature type="strand" evidence="3">
    <location>
        <begin position="307"/>
        <end position="309"/>
    </location>
</feature>
<feature type="strand" evidence="3">
    <location>
        <begin position="315"/>
        <end position="318"/>
    </location>
</feature>
<feature type="strand" evidence="3">
    <location>
        <begin position="329"/>
        <end position="331"/>
    </location>
</feature>
<feature type="strand" evidence="3">
    <location>
        <begin position="352"/>
        <end position="354"/>
    </location>
</feature>
<feature type="strand" evidence="3">
    <location>
        <begin position="364"/>
        <end position="371"/>
    </location>
</feature>
<feature type="strand" evidence="3">
    <location>
        <begin position="374"/>
        <end position="380"/>
    </location>
</feature>
<feature type="helix" evidence="3">
    <location>
        <begin position="381"/>
        <end position="391"/>
    </location>
</feature>
<feature type="helix" evidence="3">
    <location>
        <begin position="394"/>
        <end position="397"/>
    </location>
</feature>
<feature type="helix" evidence="3">
    <location>
        <begin position="419"/>
        <end position="469"/>
    </location>
</feature>
<feature type="helix" evidence="3">
    <location>
        <begin position="470"/>
        <end position="472"/>
    </location>
</feature>
<feature type="strand" evidence="3">
    <location>
        <begin position="473"/>
        <end position="475"/>
    </location>
</feature>
<feature type="strand" evidence="3">
    <location>
        <begin position="477"/>
        <end position="483"/>
    </location>
</feature>
<feature type="helix" evidence="3">
    <location>
        <begin position="489"/>
        <end position="496"/>
    </location>
</feature>
<feature type="helix" evidence="3">
    <location>
        <begin position="502"/>
        <end position="504"/>
    </location>
</feature>
<feature type="helix" evidence="3">
    <location>
        <begin position="506"/>
        <end position="514"/>
    </location>
</feature>
<protein>
    <recommendedName>
        <fullName evidence="1">Hemagglutinin</fullName>
    </recommendedName>
    <component>
        <recommendedName>
            <fullName evidence="1">Hemagglutinin HA1 chain</fullName>
        </recommendedName>
    </component>
    <component>
        <recommendedName>
            <fullName evidence="1">Hemagglutinin HA2 chain</fullName>
        </recommendedName>
    </component>
</protein>
<organism>
    <name type="scientific">Influenza A virus (strain A/Duck/Czechoslovakia/1956 H4N6)</name>
    <dbReference type="NCBI Taxonomy" id="385590"/>
    <lineage>
        <taxon>Viruses</taxon>
        <taxon>Riboviria</taxon>
        <taxon>Orthornavirae</taxon>
        <taxon>Negarnaviricota</taxon>
        <taxon>Polyploviricotina</taxon>
        <taxon>Insthoviricetes</taxon>
        <taxon>Articulavirales</taxon>
        <taxon>Orthomyxoviridae</taxon>
        <taxon>Alphainfluenzavirus</taxon>
        <taxon>Alphainfluenzavirus influenzae</taxon>
        <taxon>Influenza A virus</taxon>
    </lineage>
</organism>
<comment type="function">
    <text>Binds to sialic acid-containing receptors on the cell surface, bringing about the attachment of the virus particle to the cell. This attachment induces virion internalization of about two third of the virus particles through clathrin-dependent endocytosis and about one third through a clathrin- and caveolin-independent pathway. Plays a major role in the determination of host range restriction and virulence. Class I viral fusion protein. Responsible for penetration of the virus into the cell cytoplasm by mediating the fusion of the membrane of the endocytosed virus particle with the endosomal membrane. Low pH in endosomes induces an irreversible conformational change in HA2, releasing the fusion hydrophobic peptide. Several trimers are required to form a competent fusion pore.</text>
</comment>
<comment type="function">
    <text evidence="1">Binds to sialic acid-containing receptors on the cell surface, bringing about the attachment of the virus particle to the cell. This attachment induces virion internalization either through clathrin-dependent endocytosis or through clathrin- and caveolin-independent pathway. Plays a major role in the determination of host range restriction and virulence. Class I viral fusion protein. Responsible for penetration of the virus into the cell cytoplasm by mediating the fusion of the membrane of the endocytosed virus particle with the endosomal membrane. Low pH in endosomes induces an irreversible conformational change in HA2, releasing the fusion hydrophobic peptide. Several trimers are required to form a competent fusion pore.</text>
</comment>
<comment type="subunit">
    <text evidence="1">Homotrimer of disulfide-linked HA1-HA2.</text>
</comment>
<comment type="subcellular location">
    <subcellularLocation>
        <location evidence="1">Virion membrane</location>
        <topology evidence="1">Single-pass type I membrane protein</topology>
    </subcellularLocation>
    <subcellularLocation>
        <location evidence="1">Host apical cell membrane</location>
        <topology evidence="1">Single-pass type I membrane protein</topology>
    </subcellularLocation>
    <text evidence="1">Targeted to the apical plasma membrane in epithelial polarized cells through a signal present in the transmembrane domain. Associated with glycosphingolipid- and cholesterol-enriched detergent-resistant lipid rafts.</text>
</comment>
<comment type="PTM">
    <text evidence="1">Palmitoylated.</text>
</comment>
<comment type="PTM">
    <text evidence="1">In natural infection, inactive HA is matured into HA1 and HA2 outside the cell by one or more trypsin-like, arginine-specific endoprotease secreted by the bronchial epithelial cells. One identified protease that may be involved in this process is secreted in lungs by club cells.</text>
</comment>
<comment type="miscellaneous">
    <text>Major glycoprotein, comprises over 80% of the envelope proteins present in virus particle.</text>
</comment>
<comment type="miscellaneous">
    <text>The extent of infection into host organism is determined by HA. Influenza viruses bud from the apical surface of polarized epithelial cells (e.g. bronchial epithelial cells) into lumen of lungs and are therefore usually pneumotropic. The reason is that HA is cleaved by tryptase clara which is restricted to lungs. However, HAs of H5 and H7 pantropic avian viruses subtypes can be cleaved by furin and subtilisin-type enzymes, allowing the virus to grow in other organs than lungs.</text>
</comment>
<comment type="miscellaneous">
    <text evidence="2">The influenza A genome consist of 8 RNA segments. Genetic variation of hemagglutinin and/or neuraminidase genes results in the emergence of new influenza strains. The mechanism of variation can be the result of point mutations or the result of genetic reassortment between segments of two different strains.</text>
</comment>
<comment type="similarity">
    <text evidence="1">Belongs to the influenza viruses hemagglutinin family.</text>
</comment>
<name>HEMA_I56A1</name>
<accession>P19696</accession>
<accession>Q9EA20</accession>
<proteinExistence type="evidence at protein level"/>
<evidence type="ECO:0000255" key="1">
    <source>
        <dbReference type="HAMAP-Rule" id="MF_04072"/>
    </source>
</evidence>
<evidence type="ECO:0000305" key="2"/>
<evidence type="ECO:0007829" key="3">
    <source>
        <dbReference type="PDB" id="5XL8"/>
    </source>
</evidence>